<keyword id="KW-0067">ATP-binding</keyword>
<keyword id="KW-0963">Cytoplasm</keyword>
<keyword id="KW-0436">Ligase</keyword>
<keyword id="KW-0547">Nucleotide-binding</keyword>
<keyword id="KW-0566">Pantothenate biosynthesis</keyword>
<keyword id="KW-1185">Reference proteome</keyword>
<protein>
    <recommendedName>
        <fullName evidence="1">Pantothenate synthetase</fullName>
        <shortName evidence="1">PS</shortName>
        <ecNumber evidence="1">6.3.2.1</ecNumber>
    </recommendedName>
    <alternativeName>
        <fullName evidence="1">Pantoate--beta-alanine ligase</fullName>
    </alternativeName>
    <alternativeName>
        <fullName evidence="1">Pantoate-activating enzyme</fullName>
    </alternativeName>
</protein>
<organism>
    <name type="scientific">Novosphingobium aromaticivorans (strain ATCC 700278 / DSM 12444 / CCUG 56034 / CIP 105152 / NBRC 16084 / F199)</name>
    <dbReference type="NCBI Taxonomy" id="279238"/>
    <lineage>
        <taxon>Bacteria</taxon>
        <taxon>Pseudomonadati</taxon>
        <taxon>Pseudomonadota</taxon>
        <taxon>Alphaproteobacteria</taxon>
        <taxon>Sphingomonadales</taxon>
        <taxon>Sphingomonadaceae</taxon>
        <taxon>Novosphingobium</taxon>
    </lineage>
</organism>
<proteinExistence type="inferred from homology"/>
<name>PANC_NOVAD</name>
<comment type="function">
    <text evidence="1">Catalyzes the condensation of pantoate with beta-alanine in an ATP-dependent reaction via a pantoyl-adenylate intermediate.</text>
</comment>
<comment type="catalytic activity">
    <reaction evidence="1">
        <text>(R)-pantoate + beta-alanine + ATP = (R)-pantothenate + AMP + diphosphate + H(+)</text>
        <dbReference type="Rhea" id="RHEA:10912"/>
        <dbReference type="ChEBI" id="CHEBI:15378"/>
        <dbReference type="ChEBI" id="CHEBI:15980"/>
        <dbReference type="ChEBI" id="CHEBI:29032"/>
        <dbReference type="ChEBI" id="CHEBI:30616"/>
        <dbReference type="ChEBI" id="CHEBI:33019"/>
        <dbReference type="ChEBI" id="CHEBI:57966"/>
        <dbReference type="ChEBI" id="CHEBI:456215"/>
        <dbReference type="EC" id="6.3.2.1"/>
    </reaction>
</comment>
<comment type="pathway">
    <text evidence="1">Cofactor biosynthesis; (R)-pantothenate biosynthesis; (R)-pantothenate from (R)-pantoate and beta-alanine: step 1/1.</text>
</comment>
<comment type="subunit">
    <text evidence="1">Homodimer.</text>
</comment>
<comment type="subcellular location">
    <subcellularLocation>
        <location evidence="1">Cytoplasm</location>
    </subcellularLocation>
</comment>
<comment type="miscellaneous">
    <text evidence="1">The reaction proceeds by a bi uni uni bi ping pong mechanism.</text>
</comment>
<comment type="similarity">
    <text evidence="1">Belongs to the pantothenate synthetase family.</text>
</comment>
<feature type="chain" id="PRO_0000305502" description="Pantothenate synthetase">
    <location>
        <begin position="1"/>
        <end position="286"/>
    </location>
</feature>
<feature type="active site" description="Proton donor" evidence="1">
    <location>
        <position position="37"/>
    </location>
</feature>
<feature type="binding site" evidence="1">
    <location>
        <begin position="30"/>
        <end position="37"/>
    </location>
    <ligand>
        <name>ATP</name>
        <dbReference type="ChEBI" id="CHEBI:30616"/>
    </ligand>
</feature>
<feature type="binding site" evidence="1">
    <location>
        <position position="61"/>
    </location>
    <ligand>
        <name>(R)-pantoate</name>
        <dbReference type="ChEBI" id="CHEBI:15980"/>
    </ligand>
</feature>
<feature type="binding site" evidence="1">
    <location>
        <position position="61"/>
    </location>
    <ligand>
        <name>beta-alanine</name>
        <dbReference type="ChEBI" id="CHEBI:57966"/>
    </ligand>
</feature>
<feature type="binding site" evidence="1">
    <location>
        <begin position="147"/>
        <end position="150"/>
    </location>
    <ligand>
        <name>ATP</name>
        <dbReference type="ChEBI" id="CHEBI:30616"/>
    </ligand>
</feature>
<feature type="binding site" evidence="1">
    <location>
        <position position="153"/>
    </location>
    <ligand>
        <name>(R)-pantoate</name>
        <dbReference type="ChEBI" id="CHEBI:15980"/>
    </ligand>
</feature>
<feature type="binding site" evidence="1">
    <location>
        <position position="180"/>
    </location>
    <ligand>
        <name>ATP</name>
        <dbReference type="ChEBI" id="CHEBI:30616"/>
    </ligand>
</feature>
<feature type="binding site" evidence="1">
    <location>
        <begin position="188"/>
        <end position="191"/>
    </location>
    <ligand>
        <name>ATP</name>
        <dbReference type="ChEBI" id="CHEBI:30616"/>
    </ligand>
</feature>
<accession>Q2G319</accession>
<sequence>MQTINRLDDLRQAVDSLKNGGKTLAFVPTMGALHEGHLTLVREAARRADHVVASIFVNPRQFGPNEDLDAYPRRMATDAALLEAEGVALLWAPTVDQMYPDGYATNISVSGVSEVACGAARPGHFDGVATVVCKLFNQVRPDFALFGEKDWQQLAVIRRMARDLDLTQPHVDRIIGVPTVREDSGLALSSRNQYLSDTERAQATGLSAAMRRAIAAIEGGAEVASSLAELTREILAAGFVSVDYADLRDAATLEEVVRFEGRPARLLVAARIGGARLIDNMGVGPQ</sequence>
<evidence type="ECO:0000255" key="1">
    <source>
        <dbReference type="HAMAP-Rule" id="MF_00158"/>
    </source>
</evidence>
<dbReference type="EC" id="6.3.2.1" evidence="1"/>
<dbReference type="EMBL" id="CP000248">
    <property type="protein sequence ID" value="ABD27754.1"/>
    <property type="molecule type" value="Genomic_DNA"/>
</dbReference>
<dbReference type="RefSeq" id="WP_011446956.1">
    <property type="nucleotide sequence ID" value="NC_007794.1"/>
</dbReference>
<dbReference type="SMR" id="Q2G319"/>
<dbReference type="STRING" id="279238.Saro_3319"/>
<dbReference type="KEGG" id="nar:Saro_3319"/>
<dbReference type="eggNOG" id="COG0414">
    <property type="taxonomic scope" value="Bacteria"/>
</dbReference>
<dbReference type="HOGENOM" id="CLU_047148_0_0_5"/>
<dbReference type="UniPathway" id="UPA00028">
    <property type="reaction ID" value="UER00005"/>
</dbReference>
<dbReference type="Proteomes" id="UP000009134">
    <property type="component" value="Chromosome"/>
</dbReference>
<dbReference type="GO" id="GO:0005829">
    <property type="term" value="C:cytosol"/>
    <property type="evidence" value="ECO:0007669"/>
    <property type="project" value="TreeGrafter"/>
</dbReference>
<dbReference type="GO" id="GO:0005524">
    <property type="term" value="F:ATP binding"/>
    <property type="evidence" value="ECO:0007669"/>
    <property type="project" value="UniProtKB-KW"/>
</dbReference>
<dbReference type="GO" id="GO:0004592">
    <property type="term" value="F:pantoate-beta-alanine ligase activity"/>
    <property type="evidence" value="ECO:0007669"/>
    <property type="project" value="UniProtKB-UniRule"/>
</dbReference>
<dbReference type="GO" id="GO:0015940">
    <property type="term" value="P:pantothenate biosynthetic process"/>
    <property type="evidence" value="ECO:0007669"/>
    <property type="project" value="UniProtKB-UniRule"/>
</dbReference>
<dbReference type="CDD" id="cd00560">
    <property type="entry name" value="PanC"/>
    <property type="match status" value="1"/>
</dbReference>
<dbReference type="FunFam" id="3.40.50.620:FF:000114">
    <property type="entry name" value="Pantothenate synthetase"/>
    <property type="match status" value="1"/>
</dbReference>
<dbReference type="Gene3D" id="3.40.50.620">
    <property type="entry name" value="HUPs"/>
    <property type="match status" value="1"/>
</dbReference>
<dbReference type="Gene3D" id="3.30.1300.10">
    <property type="entry name" value="Pantoate-beta-alanine ligase, C-terminal domain"/>
    <property type="match status" value="1"/>
</dbReference>
<dbReference type="HAMAP" id="MF_00158">
    <property type="entry name" value="PanC"/>
    <property type="match status" value="1"/>
</dbReference>
<dbReference type="InterPro" id="IPR004821">
    <property type="entry name" value="Cyt_trans-like"/>
</dbReference>
<dbReference type="InterPro" id="IPR003721">
    <property type="entry name" value="Pantoate_ligase"/>
</dbReference>
<dbReference type="InterPro" id="IPR042176">
    <property type="entry name" value="Pantoate_ligase_C"/>
</dbReference>
<dbReference type="InterPro" id="IPR014729">
    <property type="entry name" value="Rossmann-like_a/b/a_fold"/>
</dbReference>
<dbReference type="NCBIfam" id="TIGR00125">
    <property type="entry name" value="cyt_tran_rel"/>
    <property type="match status" value="1"/>
</dbReference>
<dbReference type="NCBIfam" id="TIGR00018">
    <property type="entry name" value="panC"/>
    <property type="match status" value="1"/>
</dbReference>
<dbReference type="PANTHER" id="PTHR21299">
    <property type="entry name" value="CYTIDYLATE KINASE/PANTOATE-BETA-ALANINE LIGASE"/>
    <property type="match status" value="1"/>
</dbReference>
<dbReference type="PANTHER" id="PTHR21299:SF1">
    <property type="entry name" value="PANTOATE--BETA-ALANINE LIGASE"/>
    <property type="match status" value="1"/>
</dbReference>
<dbReference type="Pfam" id="PF02569">
    <property type="entry name" value="Pantoate_ligase"/>
    <property type="match status" value="1"/>
</dbReference>
<dbReference type="SUPFAM" id="SSF52374">
    <property type="entry name" value="Nucleotidylyl transferase"/>
    <property type="match status" value="1"/>
</dbReference>
<gene>
    <name evidence="1" type="primary">panC</name>
    <name type="ordered locus">Saro_3319</name>
</gene>
<reference key="1">
    <citation type="submission" date="2006-01" db="EMBL/GenBank/DDBJ databases">
        <title>Complete sequence of Novosphingobium aromaticivorans DSM 12444.</title>
        <authorList>
            <consortium name="US DOE Joint Genome Institute"/>
            <person name="Copeland A."/>
            <person name="Lucas S."/>
            <person name="Lapidus A."/>
            <person name="Barry K."/>
            <person name="Detter J.C."/>
            <person name="Glavina T."/>
            <person name="Hammon N."/>
            <person name="Israni S."/>
            <person name="Pitluck S."/>
            <person name="Chain P."/>
            <person name="Malfatti S."/>
            <person name="Shin M."/>
            <person name="Vergez L."/>
            <person name="Schmutz J."/>
            <person name="Larimer F."/>
            <person name="Land M."/>
            <person name="Kyrpides N."/>
            <person name="Ivanova N."/>
            <person name="Fredrickson J."/>
            <person name="Balkwill D."/>
            <person name="Romine M.F."/>
            <person name="Richardson P."/>
        </authorList>
    </citation>
    <scope>NUCLEOTIDE SEQUENCE [LARGE SCALE GENOMIC DNA]</scope>
    <source>
        <strain>ATCC 700278 / DSM 12444 / CCUG 56034 / CIP 105152 / NBRC 16084 / F199</strain>
    </source>
</reference>